<name>RSXC_ECOLC</name>
<accession>B1IQC5</accession>
<organism>
    <name type="scientific">Escherichia coli (strain ATCC 8739 / DSM 1576 / NBRC 3972 / NCIMB 8545 / WDCM 00012 / Crooks)</name>
    <dbReference type="NCBI Taxonomy" id="481805"/>
    <lineage>
        <taxon>Bacteria</taxon>
        <taxon>Pseudomonadati</taxon>
        <taxon>Pseudomonadota</taxon>
        <taxon>Gammaproteobacteria</taxon>
        <taxon>Enterobacterales</taxon>
        <taxon>Enterobacteriaceae</taxon>
        <taxon>Escherichia</taxon>
    </lineage>
</organism>
<evidence type="ECO:0000255" key="1">
    <source>
        <dbReference type="HAMAP-Rule" id="MF_00461"/>
    </source>
</evidence>
<evidence type="ECO:0000256" key="2">
    <source>
        <dbReference type="SAM" id="MobiDB-lite"/>
    </source>
</evidence>
<comment type="function">
    <text evidence="1">Part of a membrane-bound complex that couples electron transfer with translocation of ions across the membrane. Required to maintain the reduced state of SoxR.</text>
</comment>
<comment type="cofactor">
    <cofactor evidence="1">
        <name>[4Fe-4S] cluster</name>
        <dbReference type="ChEBI" id="CHEBI:49883"/>
    </cofactor>
    <text evidence="1">Binds 2 [4Fe-4S] clusters per subunit.</text>
</comment>
<comment type="subunit">
    <text evidence="1">The complex is composed of six subunits: RsxA, RsxB, RsxC, RsxD, RsxE and RsxG.</text>
</comment>
<comment type="subcellular location">
    <subcellularLocation>
        <location evidence="1">Cell inner membrane</location>
        <topology evidence="1">Peripheral membrane protein</topology>
    </subcellularLocation>
</comment>
<comment type="similarity">
    <text evidence="1">Belongs to the 4Fe4S bacterial-type ferredoxin family. RnfC subfamily.</text>
</comment>
<protein>
    <recommendedName>
        <fullName evidence="1">Ion-translocating oxidoreductase complex subunit C</fullName>
        <ecNumber evidence="1">7.-.-.-</ecNumber>
    </recommendedName>
    <alternativeName>
        <fullName evidence="1">Rsx electron transport complex subunit C</fullName>
    </alternativeName>
</protein>
<reference key="1">
    <citation type="submission" date="2008-02" db="EMBL/GenBank/DDBJ databases">
        <title>Complete sequence of Escherichia coli C str. ATCC 8739.</title>
        <authorList>
            <person name="Copeland A."/>
            <person name="Lucas S."/>
            <person name="Lapidus A."/>
            <person name="Glavina del Rio T."/>
            <person name="Dalin E."/>
            <person name="Tice H."/>
            <person name="Bruce D."/>
            <person name="Goodwin L."/>
            <person name="Pitluck S."/>
            <person name="Kiss H."/>
            <person name="Brettin T."/>
            <person name="Detter J.C."/>
            <person name="Han C."/>
            <person name="Kuske C.R."/>
            <person name="Schmutz J."/>
            <person name="Larimer F."/>
            <person name="Land M."/>
            <person name="Hauser L."/>
            <person name="Kyrpides N."/>
            <person name="Mikhailova N."/>
            <person name="Ingram L."/>
            <person name="Richardson P."/>
        </authorList>
    </citation>
    <scope>NUCLEOTIDE SEQUENCE [LARGE SCALE GENOMIC DNA]</scope>
    <source>
        <strain>ATCC 8739 / DSM 1576 / NBRC 3972 / NCIMB 8545 / WDCM 00012 / Crooks</strain>
    </source>
</reference>
<proteinExistence type="inferred from homology"/>
<feature type="chain" id="PRO_1000081141" description="Ion-translocating oxidoreductase complex subunit C">
    <location>
        <begin position="1"/>
        <end position="740"/>
    </location>
</feature>
<feature type="domain" description="4Fe-4S ferredoxin-type 1" evidence="1">
    <location>
        <begin position="369"/>
        <end position="397"/>
    </location>
</feature>
<feature type="domain" description="4Fe-4S ferredoxin-type 2" evidence="1">
    <location>
        <begin position="407"/>
        <end position="436"/>
    </location>
</feature>
<feature type="region of interest" description="Disordered" evidence="2">
    <location>
        <begin position="602"/>
        <end position="717"/>
    </location>
</feature>
<feature type="compositionally biased region" description="Low complexity" evidence="2">
    <location>
        <begin position="605"/>
        <end position="615"/>
    </location>
</feature>
<feature type="compositionally biased region" description="Low complexity" evidence="2">
    <location>
        <begin position="637"/>
        <end position="647"/>
    </location>
</feature>
<feature type="binding site" evidence="1">
    <location>
        <position position="377"/>
    </location>
    <ligand>
        <name>[4Fe-4S] cluster</name>
        <dbReference type="ChEBI" id="CHEBI:49883"/>
        <label>1</label>
    </ligand>
</feature>
<feature type="binding site" evidence="1">
    <location>
        <position position="380"/>
    </location>
    <ligand>
        <name>[4Fe-4S] cluster</name>
        <dbReference type="ChEBI" id="CHEBI:49883"/>
        <label>1</label>
    </ligand>
</feature>
<feature type="binding site" evidence="1">
    <location>
        <position position="383"/>
    </location>
    <ligand>
        <name>[4Fe-4S] cluster</name>
        <dbReference type="ChEBI" id="CHEBI:49883"/>
        <label>1</label>
    </ligand>
</feature>
<feature type="binding site" evidence="1">
    <location>
        <position position="387"/>
    </location>
    <ligand>
        <name>[4Fe-4S] cluster</name>
        <dbReference type="ChEBI" id="CHEBI:49883"/>
        <label>2</label>
    </ligand>
</feature>
<feature type="binding site" evidence="1">
    <location>
        <position position="416"/>
    </location>
    <ligand>
        <name>[4Fe-4S] cluster</name>
        <dbReference type="ChEBI" id="CHEBI:49883"/>
        <label>2</label>
    </ligand>
</feature>
<feature type="binding site" evidence="1">
    <location>
        <position position="419"/>
    </location>
    <ligand>
        <name>[4Fe-4S] cluster</name>
        <dbReference type="ChEBI" id="CHEBI:49883"/>
        <label>2</label>
    </ligand>
</feature>
<feature type="binding site" evidence="1">
    <location>
        <position position="422"/>
    </location>
    <ligand>
        <name>[4Fe-4S] cluster</name>
        <dbReference type="ChEBI" id="CHEBI:49883"/>
        <label>2</label>
    </ligand>
</feature>
<feature type="binding site" evidence="1">
    <location>
        <position position="426"/>
    </location>
    <ligand>
        <name>[4Fe-4S] cluster</name>
        <dbReference type="ChEBI" id="CHEBI:49883"/>
        <label>1</label>
    </ligand>
</feature>
<dbReference type="EC" id="7.-.-.-" evidence="1"/>
<dbReference type="EMBL" id="CP000946">
    <property type="protein sequence ID" value="ACA77646.1"/>
    <property type="molecule type" value="Genomic_DNA"/>
</dbReference>
<dbReference type="RefSeq" id="WP_000915767.1">
    <property type="nucleotide sequence ID" value="NZ_CP033020.1"/>
</dbReference>
<dbReference type="SMR" id="B1IQC5"/>
<dbReference type="KEGG" id="ecl:EcolC_2000"/>
<dbReference type="HOGENOM" id="CLU_010808_2_1_6"/>
<dbReference type="GO" id="GO:0005886">
    <property type="term" value="C:plasma membrane"/>
    <property type="evidence" value="ECO:0007669"/>
    <property type="project" value="UniProtKB-SubCell"/>
</dbReference>
<dbReference type="GO" id="GO:0051539">
    <property type="term" value="F:4 iron, 4 sulfur cluster binding"/>
    <property type="evidence" value="ECO:0007669"/>
    <property type="project" value="UniProtKB-KW"/>
</dbReference>
<dbReference type="GO" id="GO:0009055">
    <property type="term" value="F:electron transfer activity"/>
    <property type="evidence" value="ECO:0007669"/>
    <property type="project" value="InterPro"/>
</dbReference>
<dbReference type="GO" id="GO:0046872">
    <property type="term" value="F:metal ion binding"/>
    <property type="evidence" value="ECO:0007669"/>
    <property type="project" value="UniProtKB-KW"/>
</dbReference>
<dbReference type="GO" id="GO:0022900">
    <property type="term" value="P:electron transport chain"/>
    <property type="evidence" value="ECO:0007669"/>
    <property type="project" value="UniProtKB-UniRule"/>
</dbReference>
<dbReference type="Gene3D" id="3.30.70.20">
    <property type="match status" value="1"/>
</dbReference>
<dbReference type="Gene3D" id="3.40.50.11540">
    <property type="entry name" value="NADH-ubiquinone oxidoreductase 51kDa subunit"/>
    <property type="match status" value="1"/>
</dbReference>
<dbReference type="HAMAP" id="MF_00461">
    <property type="entry name" value="RsxC_RnfC"/>
    <property type="match status" value="1"/>
</dbReference>
<dbReference type="InterPro" id="IPR017896">
    <property type="entry name" value="4Fe4S_Fe-S-bd"/>
</dbReference>
<dbReference type="InterPro" id="IPR017900">
    <property type="entry name" value="4Fe4S_Fe_S_CS"/>
</dbReference>
<dbReference type="InterPro" id="IPR010208">
    <property type="entry name" value="Ion_transpt_RnfC/RsxC"/>
</dbReference>
<dbReference type="InterPro" id="IPR011538">
    <property type="entry name" value="Nuo51_FMN-bd"/>
</dbReference>
<dbReference type="InterPro" id="IPR037225">
    <property type="entry name" value="Nuo51_FMN-bd_sf"/>
</dbReference>
<dbReference type="InterPro" id="IPR026902">
    <property type="entry name" value="RnfC_N"/>
</dbReference>
<dbReference type="InterPro" id="IPR019554">
    <property type="entry name" value="Soluble_ligand-bd"/>
</dbReference>
<dbReference type="NCBIfam" id="NF003454">
    <property type="entry name" value="PRK05035.1"/>
    <property type="match status" value="1"/>
</dbReference>
<dbReference type="NCBIfam" id="TIGR01945">
    <property type="entry name" value="rnfC"/>
    <property type="match status" value="1"/>
</dbReference>
<dbReference type="PANTHER" id="PTHR43034">
    <property type="entry name" value="ION-TRANSLOCATING OXIDOREDUCTASE COMPLEX SUBUNIT C"/>
    <property type="match status" value="1"/>
</dbReference>
<dbReference type="PANTHER" id="PTHR43034:SF2">
    <property type="entry name" value="ION-TRANSLOCATING OXIDOREDUCTASE COMPLEX SUBUNIT C"/>
    <property type="match status" value="1"/>
</dbReference>
<dbReference type="Pfam" id="PF01512">
    <property type="entry name" value="Complex1_51K"/>
    <property type="match status" value="1"/>
</dbReference>
<dbReference type="Pfam" id="PF12838">
    <property type="entry name" value="Fer4_7"/>
    <property type="match status" value="1"/>
</dbReference>
<dbReference type="Pfam" id="PF13375">
    <property type="entry name" value="RnfC_N"/>
    <property type="match status" value="1"/>
</dbReference>
<dbReference type="Pfam" id="PF10531">
    <property type="entry name" value="SLBB"/>
    <property type="match status" value="1"/>
</dbReference>
<dbReference type="SUPFAM" id="SSF46548">
    <property type="entry name" value="alpha-helical ferredoxin"/>
    <property type="match status" value="1"/>
</dbReference>
<dbReference type="SUPFAM" id="SSF142019">
    <property type="entry name" value="Nqo1 FMN-binding domain-like"/>
    <property type="match status" value="1"/>
</dbReference>
<dbReference type="PROSITE" id="PS00198">
    <property type="entry name" value="4FE4S_FER_1"/>
    <property type="match status" value="2"/>
</dbReference>
<dbReference type="PROSITE" id="PS51379">
    <property type="entry name" value="4FE4S_FER_2"/>
    <property type="match status" value="2"/>
</dbReference>
<sequence length="740" mass="80172">MLKLFSAFRKNKIWDFNGGIHPPEMKTQSNGTPLRQVPLAQRFVIPLKQHIGAEGELCVSVGDKVLRGQPLTRGRGKMLPVHAPTSGTVTAIAPHSTAHPSALAELSVIIDADGEDCWIPRDGWADYRTRSREELIERIHQFGVAGLGGAGFPTGVKLQGGGDKIETLIINAAECEPYITADDRLMQDCAAQVVEGIRILAHILQPREILIGIEDNKPQAISMLRAVLADSNDISLRVIPTKYPSGGAKQLTYILTGKQVPHGGRSSDIGVLMQNVGTAYAVKRAVIDGEPITERVVTLTGEAIARPGNVWARLGTPVRHLLNDAGFCPSADQMVIMGGPLMGFTLPWLDVPVVKITNCLLAPSANELGEPQEEQSCIRCSACADACPADLLPQQLYWFSKGQQHDKATTHNIADCIECGACAWVCPSNIPLVQYFRQEKAEIAAIRQEEKRAAEAKARFEARQARLEREKAARLERHKSAAVQPAAKDKDAIAAALARVKEKQAQATQPIVIKAGERPDNSAIIAAREARKAQARAKQAELQQTNDAATVADPRKTAVEAAIARAKARKLEQQQANAEPEEQVDPRKAAVEAAIARAKARKLEQQQANAEPEQQVDPRKAAVEAAIARAKARKLEQQQANAEPEQQVDPRKAAVEAAIARAKARKREQQPANAEPEEQVDPRKAAVEAAIARAKARKLEQQQANAVPEEQVDPRKAAVAAAIARAQAKKAAQQKVVNED</sequence>
<keyword id="KW-0004">4Fe-4S</keyword>
<keyword id="KW-0997">Cell inner membrane</keyword>
<keyword id="KW-1003">Cell membrane</keyword>
<keyword id="KW-0249">Electron transport</keyword>
<keyword id="KW-0408">Iron</keyword>
<keyword id="KW-0411">Iron-sulfur</keyword>
<keyword id="KW-0472">Membrane</keyword>
<keyword id="KW-0479">Metal-binding</keyword>
<keyword id="KW-0677">Repeat</keyword>
<keyword id="KW-1278">Translocase</keyword>
<keyword id="KW-0813">Transport</keyword>
<gene>
    <name evidence="1" type="primary">rsxC</name>
    <name type="ordered locus">EcolC_2000</name>
</gene>